<keyword id="KW-1015">Disulfide bond</keyword>
<keyword id="KW-0872">Ion channel impairing toxin</keyword>
<keyword id="KW-0528">Neurotoxin</keyword>
<keyword id="KW-0632">Potassium channel impairing toxin</keyword>
<keyword id="KW-0964">Secreted</keyword>
<keyword id="KW-0732">Signal</keyword>
<keyword id="KW-0800">Toxin</keyword>
<evidence type="ECO:0000250" key="1">
    <source>
        <dbReference type="UniProtKB" id="P69940"/>
    </source>
</evidence>
<evidence type="ECO:0000255" key="2"/>
<evidence type="ECO:0000255" key="3">
    <source>
        <dbReference type="PROSITE-ProRule" id="PRU01209"/>
    </source>
</evidence>
<evidence type="ECO:0000303" key="4">
    <source>
    </source>
</evidence>
<evidence type="ECO:0000305" key="5"/>
<evidence type="ECO:0000305" key="6">
    <source>
    </source>
</evidence>
<protein>
    <recommendedName>
        <fullName evidence="6">Potassium channel toxin BmTXK-beta-2</fullName>
        <shortName>BmTX K beta2'</shortName>
        <shortName evidence="4">BmTXKbeta2</shortName>
        <shortName>Toxin BmTX K-beta2</shortName>
    </recommendedName>
    <alternativeName>
        <fullName>Potassium channel toxin beta-KTx 4</fullName>
    </alternativeName>
</protein>
<comment type="function">
    <text evidence="1">Inhibits voltage-gated potassium channel.</text>
</comment>
<comment type="subcellular location">
    <subcellularLocation>
        <location evidence="6">Secreted</location>
    </subcellularLocation>
</comment>
<comment type="tissue specificity">
    <text evidence="6">Expressed by the venom gland.</text>
</comment>
<comment type="similarity">
    <text evidence="5">Belongs to the long chain scorpion toxin family. Class 1 subfamily.</text>
</comment>
<sequence>MQRNLVVLLFLGMVALSSCGLREKHFQKLVKYAVPEGTLRTIIQTAVHKLGKTQFGCPAYQGYCDDHCQDIKKEEGFCHGFKCKCGIPMGF</sequence>
<organism>
    <name type="scientific">Olivierus martensii</name>
    <name type="common">Manchurian scorpion</name>
    <name type="synonym">Mesobuthus martensii</name>
    <dbReference type="NCBI Taxonomy" id="34649"/>
    <lineage>
        <taxon>Eukaryota</taxon>
        <taxon>Metazoa</taxon>
        <taxon>Ecdysozoa</taxon>
        <taxon>Arthropoda</taxon>
        <taxon>Chelicerata</taxon>
        <taxon>Arachnida</taxon>
        <taxon>Scorpiones</taxon>
        <taxon>Buthida</taxon>
        <taxon>Buthoidea</taxon>
        <taxon>Buthidae</taxon>
        <taxon>Olivierus</taxon>
    </lineage>
</organism>
<name>KBX1_OLIMR</name>
<reference key="1">
    <citation type="journal article" date="1999" name="FEBS Lett.">
        <title>Molecular cloning and sequencing of two 'short chain' and two 'long chain' K(+) channel-blocking peptides from the Chinese scorpion Buthus martensii Karsch.</title>
        <authorList>
            <person name="Zhu S.-Y."/>
            <person name="Li W.-X."/>
            <person name="Zeng X.-C."/>
            <person name="Jiang D.-H."/>
            <person name="Mao X."/>
            <person name="Liu H."/>
        </authorList>
    </citation>
    <scope>NUCLEOTIDE SEQUENCE [MRNA]</scope>
    <source>
        <tissue>Venom gland</tissue>
    </source>
</reference>
<proteinExistence type="inferred from homology"/>
<accession>Q9N661</accession>
<feature type="signal peptide" evidence="2">
    <location>
        <begin position="1"/>
        <end position="19"/>
    </location>
</feature>
<feature type="propeptide" id="PRO_0000035346" evidence="5">
    <location>
        <begin position="20"/>
        <end position="27"/>
    </location>
</feature>
<feature type="chain" id="PRO_0000035347" description="Potassium channel toxin BmTXK-beta-2">
    <location>
        <begin position="28"/>
        <end position="91"/>
    </location>
</feature>
<feature type="domain" description="BetaSPN-type CS-alpha/beta" evidence="3">
    <location>
        <begin position="54"/>
        <end position="91"/>
    </location>
</feature>
<feature type="disulfide bond" evidence="3">
    <location>
        <begin position="57"/>
        <end position="78"/>
    </location>
</feature>
<feature type="disulfide bond" evidence="3">
    <location>
        <begin position="64"/>
        <end position="83"/>
    </location>
</feature>
<feature type="disulfide bond" evidence="3">
    <location>
        <begin position="68"/>
        <end position="85"/>
    </location>
</feature>
<dbReference type="EMBL" id="AF155370">
    <property type="protein sequence ID" value="AAF31479.1"/>
    <property type="molecule type" value="mRNA"/>
</dbReference>
<dbReference type="EMBL" id="AF156173">
    <property type="protein sequence ID" value="AAF29466.1"/>
    <property type="molecule type" value="mRNA"/>
</dbReference>
<dbReference type="SMR" id="Q9N661"/>
<dbReference type="GO" id="GO:0005576">
    <property type="term" value="C:extracellular region"/>
    <property type="evidence" value="ECO:0007669"/>
    <property type="project" value="UniProtKB-SubCell"/>
</dbReference>
<dbReference type="GO" id="GO:0015459">
    <property type="term" value="F:potassium channel regulator activity"/>
    <property type="evidence" value="ECO:0007669"/>
    <property type="project" value="UniProtKB-KW"/>
</dbReference>
<dbReference type="GO" id="GO:0090729">
    <property type="term" value="F:toxin activity"/>
    <property type="evidence" value="ECO:0007669"/>
    <property type="project" value="UniProtKB-KW"/>
</dbReference>
<dbReference type="InterPro" id="IPR029237">
    <property type="entry name" value="Long_scorpion_toxin_alpha/beta"/>
</dbReference>
<dbReference type="Pfam" id="PF14866">
    <property type="entry name" value="Scorpion_toxin_alpha-beta"/>
    <property type="match status" value="1"/>
</dbReference>
<dbReference type="PROSITE" id="PS51862">
    <property type="entry name" value="BSPN_CSAB"/>
    <property type="match status" value="1"/>
</dbReference>